<protein>
    <recommendedName>
        <fullName>tRNA methyltransferase 10 homolog B</fullName>
        <ecNumber evidence="1">2.1.1.221</ecNumber>
    </recommendedName>
    <alternativeName>
        <fullName>RNA (guanine-9-)-methyltransferase domain-containing protein 3</fullName>
    </alternativeName>
    <alternativeName>
        <fullName>tRNA (guanine(9)-N(1))-methyltransferase TRMT10B</fullName>
    </alternativeName>
</protein>
<name>TM10B_RAT</name>
<proteinExistence type="evidence at transcript level"/>
<gene>
    <name type="primary">Trmt10b</name>
    <name type="synonym">Rg9mtd3</name>
</gene>
<evidence type="ECO:0000250" key="1">
    <source>
        <dbReference type="UniProtKB" id="Q6PF06"/>
    </source>
</evidence>
<evidence type="ECO:0000255" key="2"/>
<evidence type="ECO:0000255" key="3">
    <source>
        <dbReference type="PROSITE-ProRule" id="PRU01012"/>
    </source>
</evidence>
<evidence type="ECO:0000256" key="4">
    <source>
        <dbReference type="SAM" id="MobiDB-lite"/>
    </source>
</evidence>
<sequence>MDCEWEGRPQRAGSRASQDPEGLPEARDDGLSESFLLLQMDVEYDPQEKRRPANSAAWSSKNVQRKQRHWERIVSSKKSKRKQERERRKIKRAEDLGNGTCPQHSKRFLKALTKEKLLEAKHSGPRLCVDLSMTQHMSKKELSRLAGQIRRLYGSNKKASRPFWIYLTGFSTDSPLYEECLRMNDGFSAYVLDVTEEDCFSLFPLETLVYLTPDSEHPLEDIDLSTVYIIGGLVDESIQKKVTFQKAQEYSVKTARLPIQEHMIRCQNEKNFHSEILAINQVFDILSAYLETRDWPEALKKGVSPGKGYILQNSVE</sequence>
<keyword id="KW-0175">Coiled coil</keyword>
<keyword id="KW-0489">Methyltransferase</keyword>
<keyword id="KW-1185">Reference proteome</keyword>
<keyword id="KW-0949">S-adenosyl-L-methionine</keyword>
<keyword id="KW-0808">Transferase</keyword>
<feature type="chain" id="PRO_0000311323" description="tRNA methyltransferase 10 homolog B">
    <location>
        <begin position="1"/>
        <end position="316"/>
    </location>
</feature>
<feature type="domain" description="SAM-dependent MTase TRM10-type" evidence="3">
    <location>
        <begin position="113"/>
        <end position="310"/>
    </location>
</feature>
<feature type="region of interest" description="Disordered" evidence="4">
    <location>
        <begin position="1"/>
        <end position="30"/>
    </location>
</feature>
<feature type="region of interest" description="Disordered" evidence="4">
    <location>
        <begin position="42"/>
        <end position="98"/>
    </location>
</feature>
<feature type="coiled-coil region" evidence="2">
    <location>
        <begin position="75"/>
        <end position="96"/>
    </location>
</feature>
<feature type="compositionally biased region" description="Basic residues" evidence="4">
    <location>
        <begin position="63"/>
        <end position="82"/>
    </location>
</feature>
<feature type="compositionally biased region" description="Basic and acidic residues" evidence="4">
    <location>
        <begin position="83"/>
        <end position="95"/>
    </location>
</feature>
<accession>Q5RJK3</accession>
<dbReference type="EC" id="2.1.1.221" evidence="1"/>
<dbReference type="EMBL" id="BC086603">
    <property type="protein sequence ID" value="AAH86603.1"/>
    <property type="molecule type" value="mRNA"/>
</dbReference>
<dbReference type="RefSeq" id="NP_001013108.1">
    <property type="nucleotide sequence ID" value="NM_001013090.2"/>
</dbReference>
<dbReference type="RefSeq" id="XP_006238104.1">
    <property type="nucleotide sequence ID" value="XM_006238042.2"/>
</dbReference>
<dbReference type="RefSeq" id="XP_006238105.1">
    <property type="nucleotide sequence ID" value="XM_006238043.4"/>
</dbReference>
<dbReference type="RefSeq" id="XP_006238106.1">
    <property type="nucleotide sequence ID" value="XM_006238044.5"/>
</dbReference>
<dbReference type="SMR" id="Q5RJK3"/>
<dbReference type="FunCoup" id="Q5RJK3">
    <property type="interactions" value="1680"/>
</dbReference>
<dbReference type="STRING" id="10116.ENSRNOP00000016719"/>
<dbReference type="PhosphoSitePlus" id="Q5RJK3"/>
<dbReference type="PaxDb" id="10116-ENSRNOP00000016719"/>
<dbReference type="Ensembl" id="ENSRNOT00000016720.7">
    <property type="protein sequence ID" value="ENSRNOP00000016719.4"/>
    <property type="gene ID" value="ENSRNOG00000012454.7"/>
</dbReference>
<dbReference type="GeneID" id="298081"/>
<dbReference type="KEGG" id="rno:298081"/>
<dbReference type="UCSC" id="RGD:1310735">
    <property type="organism name" value="rat"/>
</dbReference>
<dbReference type="AGR" id="RGD:1310735"/>
<dbReference type="CTD" id="158234"/>
<dbReference type="RGD" id="1310735">
    <property type="gene designation" value="Trmt10b"/>
</dbReference>
<dbReference type="eggNOG" id="KOG2967">
    <property type="taxonomic scope" value="Eukaryota"/>
</dbReference>
<dbReference type="GeneTree" id="ENSGT00530000063169"/>
<dbReference type="HOGENOM" id="CLU_034384_8_0_1"/>
<dbReference type="InParanoid" id="Q5RJK3"/>
<dbReference type="OrthoDB" id="73141at9989"/>
<dbReference type="PhylomeDB" id="Q5RJK3"/>
<dbReference type="TreeFam" id="TF330972"/>
<dbReference type="PRO" id="PR:Q5RJK3"/>
<dbReference type="Proteomes" id="UP000002494">
    <property type="component" value="Chromosome 5"/>
</dbReference>
<dbReference type="Bgee" id="ENSRNOG00000012454">
    <property type="expression patterns" value="Expressed in pancreas and 19 other cell types or tissues"/>
</dbReference>
<dbReference type="GO" id="GO:0005829">
    <property type="term" value="C:cytosol"/>
    <property type="evidence" value="ECO:0000266"/>
    <property type="project" value="RGD"/>
</dbReference>
<dbReference type="GO" id="GO:0005743">
    <property type="term" value="C:mitochondrial inner membrane"/>
    <property type="evidence" value="ECO:0000266"/>
    <property type="project" value="RGD"/>
</dbReference>
<dbReference type="GO" id="GO:0005654">
    <property type="term" value="C:nucleoplasm"/>
    <property type="evidence" value="ECO:0000318"/>
    <property type="project" value="GO_Central"/>
</dbReference>
<dbReference type="GO" id="GO:0005634">
    <property type="term" value="C:nucleus"/>
    <property type="evidence" value="ECO:0000318"/>
    <property type="project" value="GO_Central"/>
</dbReference>
<dbReference type="GO" id="GO:0042721">
    <property type="term" value="C:TIM22 mitochondrial import inner membrane insertion complex"/>
    <property type="evidence" value="ECO:0000266"/>
    <property type="project" value="RGD"/>
</dbReference>
<dbReference type="GO" id="GO:0052905">
    <property type="term" value="F:tRNA (guanosine(9)-N1)-methyltransferase activity"/>
    <property type="evidence" value="ECO:0000266"/>
    <property type="project" value="RGD"/>
</dbReference>
<dbReference type="GO" id="GO:0000049">
    <property type="term" value="F:tRNA binding"/>
    <property type="evidence" value="ECO:0000318"/>
    <property type="project" value="GO_Central"/>
</dbReference>
<dbReference type="GO" id="GO:0045039">
    <property type="term" value="P:protein insertion into mitochondrial inner membrane"/>
    <property type="evidence" value="ECO:0000266"/>
    <property type="project" value="RGD"/>
</dbReference>
<dbReference type="GO" id="GO:0002939">
    <property type="term" value="P:tRNA N1-guanine methylation"/>
    <property type="evidence" value="ECO:0000318"/>
    <property type="project" value="GO_Central"/>
</dbReference>
<dbReference type="CDD" id="cd18100">
    <property type="entry name" value="Trm10euk_B"/>
    <property type="match status" value="1"/>
</dbReference>
<dbReference type="FunFam" id="3.40.1280.30:FF:000002">
    <property type="entry name" value="tRNA methyltransferase 10 homolog B"/>
    <property type="match status" value="1"/>
</dbReference>
<dbReference type="Gene3D" id="3.40.1280.30">
    <property type="match status" value="1"/>
</dbReference>
<dbReference type="InterPro" id="IPR028564">
    <property type="entry name" value="MT_TRM10-typ"/>
</dbReference>
<dbReference type="InterPro" id="IPR038459">
    <property type="entry name" value="MT_TRM10-typ_sf"/>
</dbReference>
<dbReference type="InterPro" id="IPR047911">
    <property type="entry name" value="Trm10_B_MTase_dom"/>
</dbReference>
<dbReference type="InterPro" id="IPR007356">
    <property type="entry name" value="tRNA_m1G_MeTrfase_euk"/>
</dbReference>
<dbReference type="InterPro" id="IPR016009">
    <property type="entry name" value="tRNA_MeTrfase_TRMD/TRM10"/>
</dbReference>
<dbReference type="PANTHER" id="PTHR13563">
    <property type="entry name" value="TRNA (GUANINE-9-) METHYLTRANSFERASE"/>
    <property type="match status" value="1"/>
</dbReference>
<dbReference type="PANTHER" id="PTHR13563:SF19">
    <property type="entry name" value="TRNA METHYLTRANSFERASE 10 HOMOLOG B"/>
    <property type="match status" value="1"/>
</dbReference>
<dbReference type="Pfam" id="PF01746">
    <property type="entry name" value="tRNA_m1G_MT"/>
    <property type="match status" value="1"/>
</dbReference>
<dbReference type="PROSITE" id="PS51675">
    <property type="entry name" value="SAM_MT_TRM10"/>
    <property type="match status" value="1"/>
</dbReference>
<comment type="function">
    <text evidence="1">S-adenosyl-L-methionine-dependent guanine N(1)-methyltransferase that catalyzes the formation of N(1)-methylguanine at position 9 (m1G9) in tRNAs. Probably not able to catalyze formation of N(1)-methyladenine at position 9 (m1A9) in tRNAs.</text>
</comment>
<comment type="catalytic activity">
    <reaction evidence="1">
        <text>guanosine(9) in tRNA + S-adenosyl-L-methionine = N(1)-methylguanosine(9) in tRNA + S-adenosyl-L-homocysteine + H(+)</text>
        <dbReference type="Rhea" id="RHEA:43156"/>
        <dbReference type="Rhea" id="RHEA-COMP:10367"/>
        <dbReference type="Rhea" id="RHEA-COMP:10368"/>
        <dbReference type="ChEBI" id="CHEBI:15378"/>
        <dbReference type="ChEBI" id="CHEBI:57856"/>
        <dbReference type="ChEBI" id="CHEBI:59789"/>
        <dbReference type="ChEBI" id="CHEBI:73542"/>
        <dbReference type="ChEBI" id="CHEBI:74269"/>
        <dbReference type="EC" id="2.1.1.221"/>
    </reaction>
</comment>
<comment type="similarity">
    <text evidence="3">Belongs to the class IV-like SAM-binding methyltransferase superfamily. TRM10 family.</text>
</comment>
<organism>
    <name type="scientific">Rattus norvegicus</name>
    <name type="common">Rat</name>
    <dbReference type="NCBI Taxonomy" id="10116"/>
    <lineage>
        <taxon>Eukaryota</taxon>
        <taxon>Metazoa</taxon>
        <taxon>Chordata</taxon>
        <taxon>Craniata</taxon>
        <taxon>Vertebrata</taxon>
        <taxon>Euteleostomi</taxon>
        <taxon>Mammalia</taxon>
        <taxon>Eutheria</taxon>
        <taxon>Euarchontoglires</taxon>
        <taxon>Glires</taxon>
        <taxon>Rodentia</taxon>
        <taxon>Myomorpha</taxon>
        <taxon>Muroidea</taxon>
        <taxon>Muridae</taxon>
        <taxon>Murinae</taxon>
        <taxon>Rattus</taxon>
    </lineage>
</organism>
<reference key="1">
    <citation type="journal article" date="2004" name="Genome Res.">
        <title>The status, quality, and expansion of the NIH full-length cDNA project: the Mammalian Gene Collection (MGC).</title>
        <authorList>
            <consortium name="The MGC Project Team"/>
        </authorList>
    </citation>
    <scope>NUCLEOTIDE SEQUENCE [LARGE SCALE MRNA]</scope>
    <source>
        <tissue>Brain</tissue>
    </source>
</reference>